<dbReference type="EMBL" id="CP000970">
    <property type="protein sequence ID" value="ACB19066.1"/>
    <property type="molecule type" value="Genomic_DNA"/>
</dbReference>
<dbReference type="RefSeq" id="WP_000450409.1">
    <property type="nucleotide sequence ID" value="NC_010498.1"/>
</dbReference>
<dbReference type="SMR" id="B1LP36"/>
<dbReference type="KEGG" id="ecm:EcSMS35_1055"/>
<dbReference type="HOGENOM" id="CLU_153146_0_0_6"/>
<dbReference type="Proteomes" id="UP000007011">
    <property type="component" value="Chromosome"/>
</dbReference>
<dbReference type="GO" id="GO:0005829">
    <property type="term" value="C:cytosol"/>
    <property type="evidence" value="ECO:0007669"/>
    <property type="project" value="TreeGrafter"/>
</dbReference>
<dbReference type="HAMAP" id="MF_00683">
    <property type="entry name" value="Pole_loc_TmaR"/>
    <property type="match status" value="1"/>
</dbReference>
<dbReference type="InterPro" id="IPR007458">
    <property type="entry name" value="DUF496"/>
</dbReference>
<dbReference type="InterPro" id="IPR053375">
    <property type="entry name" value="UPF0265"/>
</dbReference>
<dbReference type="NCBIfam" id="NF003844">
    <property type="entry name" value="PRK05423.1"/>
    <property type="match status" value="1"/>
</dbReference>
<dbReference type="NCBIfam" id="NF040881">
    <property type="entry name" value="PTS_reg_TmaR"/>
    <property type="match status" value="1"/>
</dbReference>
<dbReference type="PANTHER" id="PTHR39591">
    <property type="entry name" value="UPF0265 PROTEIN YEEX"/>
    <property type="match status" value="1"/>
</dbReference>
<dbReference type="PANTHER" id="PTHR39591:SF1">
    <property type="entry name" value="UPF0265 PROTEIN YEEX"/>
    <property type="match status" value="1"/>
</dbReference>
<dbReference type="Pfam" id="PF04363">
    <property type="entry name" value="DUF496"/>
    <property type="match status" value="1"/>
</dbReference>
<dbReference type="PIRSF" id="PIRSF028773">
    <property type="entry name" value="UCP028773"/>
    <property type="match status" value="1"/>
</dbReference>
<gene>
    <name evidence="1" type="primary">tmaR</name>
    <name type="ordered locus">EcSMS35_1055</name>
</gene>
<name>TMAR_ECOSM</name>
<sequence>METTKPSFQDVLEFVRLFRRKNKLQREIQDVEKKIRDNQKRVLLLDNLSDYIKPGMSVEAIQGIIASMKGDYEDRVDDYIIKNAELSKERRDISKKLKAMGEMKNGEAK</sequence>
<organism>
    <name type="scientific">Escherichia coli (strain SMS-3-5 / SECEC)</name>
    <dbReference type="NCBI Taxonomy" id="439855"/>
    <lineage>
        <taxon>Bacteria</taxon>
        <taxon>Pseudomonadati</taxon>
        <taxon>Pseudomonadota</taxon>
        <taxon>Gammaproteobacteria</taxon>
        <taxon>Enterobacterales</taxon>
        <taxon>Enterobacteriaceae</taxon>
        <taxon>Escherichia</taxon>
    </lineage>
</organism>
<feature type="chain" id="PRO_1000131766" description="Pole-localizer protein TmaR">
    <location>
        <begin position="1"/>
        <end position="109"/>
    </location>
</feature>
<feature type="coiled-coil region" evidence="1">
    <location>
        <begin position="14"/>
        <end position="41"/>
    </location>
</feature>
<protein>
    <recommendedName>
        <fullName evidence="1">Pole-localizer protein TmaR</fullName>
    </recommendedName>
</protein>
<evidence type="ECO:0000255" key="1">
    <source>
        <dbReference type="HAMAP-Rule" id="MF_00683"/>
    </source>
</evidence>
<accession>B1LP36</accession>
<reference key="1">
    <citation type="journal article" date="2008" name="J. Bacteriol.">
        <title>Insights into the environmental resistance gene pool from the genome sequence of the multidrug-resistant environmental isolate Escherichia coli SMS-3-5.</title>
        <authorList>
            <person name="Fricke W.F."/>
            <person name="Wright M.S."/>
            <person name="Lindell A.H."/>
            <person name="Harkins D.M."/>
            <person name="Baker-Austin C."/>
            <person name="Ravel J."/>
            <person name="Stepanauskas R."/>
        </authorList>
    </citation>
    <scope>NUCLEOTIDE SEQUENCE [LARGE SCALE GENOMIC DNA]</scope>
    <source>
        <strain>SMS-3-5 / SECEC</strain>
    </source>
</reference>
<comment type="function">
    <text evidence="1">Pole-localizer protein involved in the regulation of several cellular processes.</text>
</comment>
<comment type="subcellular location">
    <subcellularLocation>
        <location evidence="1">Cytoplasm</location>
    </subcellularLocation>
    <text evidence="1">Forms clusters that localize mainly near one pole of the cell.</text>
</comment>
<comment type="similarity">
    <text evidence="1">Belongs to the pole-localizer TmaR family.</text>
</comment>
<proteinExistence type="inferred from homology"/>
<keyword id="KW-0175">Coiled coil</keyword>
<keyword id="KW-0963">Cytoplasm</keyword>